<feature type="signal peptide" evidence="3">
    <location>
        <begin position="1"/>
        <end position="29"/>
    </location>
</feature>
<feature type="chain" id="PRO_0000001124" description="Mannuronan C5-epimerase AlgG">
    <location>
        <begin position="30"/>
        <end position="525"/>
    </location>
</feature>
<feature type="repeat" description="PbH1 1" evidence="3">
    <location>
        <begin position="287"/>
        <end position="309"/>
    </location>
</feature>
<feature type="repeat" description="PbH1 2" evidence="3">
    <location>
        <begin position="311"/>
        <end position="334"/>
    </location>
</feature>
<feature type="repeat" description="PbH1 3" evidence="3">
    <location>
        <begin position="336"/>
        <end position="358"/>
    </location>
</feature>
<feature type="repeat" description="PbH1 4" evidence="3">
    <location>
        <begin position="360"/>
        <end position="382"/>
    </location>
</feature>
<feature type="repeat" description="PbH1 5" evidence="3">
    <location>
        <begin position="383"/>
        <end position="405"/>
    </location>
</feature>
<feature type="active site" description="Proton acceptor" evidence="2">
    <location>
        <position position="308"/>
    </location>
</feature>
<name>ALGG_AZOVI</name>
<evidence type="ECO:0000250" key="1">
    <source>
        <dbReference type="UniProtKB" id="Q51371"/>
    </source>
</evidence>
<evidence type="ECO:0000250" key="2">
    <source>
        <dbReference type="UniProtKB" id="Q887Q3"/>
    </source>
</evidence>
<evidence type="ECO:0000255" key="3"/>
<evidence type="ECO:0000269" key="4">
    <source>
    </source>
</evidence>
<evidence type="ECO:0000303" key="5">
    <source>
    </source>
</evidence>
<evidence type="ECO:0000305" key="6"/>
<comment type="function">
    <text evidence="1 4">Catalyzes the epimerization of beta-D-mannuronate to alpha-L-guluronate during the synthesis of the linear polysaccharide alginate (PubMed:8830682). In addition, is part of a periplasmic protein complex that protects alginate from degradation by AlgL by channeling the newly formed alginate polymer through a scaffold that transfers the alginate polymer through the periplasmic space to the outer membrane secretin AlgE (By similarity).</text>
</comment>
<comment type="catalytic activity">
    <reaction evidence="4">
        <text>[(1-&gt;4)-beta-D-mannuronosyl](n) = [alginate](n)</text>
        <dbReference type="Rhea" id="RHEA:45572"/>
        <dbReference type="Rhea" id="RHEA-COMP:11264"/>
        <dbReference type="Rhea" id="RHEA-COMP:11270"/>
        <dbReference type="ChEBI" id="CHEBI:58187"/>
        <dbReference type="ChEBI" id="CHEBI:85311"/>
        <dbReference type="EC" id="5.1.3.37"/>
    </reaction>
</comment>
<comment type="activity regulation">
    <text evidence="4">Inhibited by zinc.</text>
</comment>
<comment type="pathway">
    <text evidence="1">Glycan biosynthesis; alginate biosynthesis.</text>
</comment>
<comment type="subcellular location">
    <subcellularLocation>
        <location evidence="1">Periplasm</location>
    </subcellularLocation>
</comment>
<comment type="induction">
    <text evidence="4">Produced during vegetative growth.</text>
</comment>
<comment type="miscellaneous">
    <text evidence="4">This epimerase does not require calcium for its activity. Probably cannot form G blocks.</text>
</comment>
<comment type="similarity">
    <text evidence="6">Belongs to the D-mannuronate C5-epimerase family.</text>
</comment>
<sequence>MNVQRKLASTQLKPVLLGVLLATSAWSQAAPPEQARQSAPPTLSSKQYSVTSASIEALKLDPPKLPDLSGYTHAAVEAKIRRKPGGRIAAAMLQQTALKDFTGGSGRLREWIVRQGGMPHAIFIEGGYVELGQLARQLPANQFAETTPGVYVARVPIVVAPGATLHIGKNVKELRLSEERGAFLVNDGKLFITDTKLVGWSEKNNAPSAYRGPESFWAFLVSWGGTETYISRRPVASLGYNTSKAYGVSITQYTPEMHKRLKRPRPTGWLIDSVFEDIYYGFYCYEADDVVLKGNTYRDNIIYGIDPHDRSERLVIAENHVYGTKKKHGIIVSREVNNSWIINNRTHDNKLSGIVLDRNSEHNLVAYNEVYQNHSDGITLYESSNNLIWGNRLINNARHGIRMRNSVNIRIYENLSVVNQLTGIYGHIKDLSSTDRDFKLDPFDTKVSMIVVGGQLTGNGSSPISVDSPLSLELYRVEMLAPTKSSGLTFTGILEDKQEEILDLLVRRQKAVLIDPVVDLAQAEL</sequence>
<accession>P70805</accession>
<protein>
    <recommendedName>
        <fullName evidence="5">Mannuronan C5-epimerase AlgG</fullName>
        <ecNumber evidence="4">5.1.3.37</ecNumber>
    </recommendedName>
    <alternativeName>
        <fullName evidence="1">Poly(beta-D-mannuronate) C5 epimerase</fullName>
    </alternativeName>
</protein>
<proteinExistence type="evidence at protein level"/>
<gene>
    <name evidence="5" type="primary">algG</name>
</gene>
<reference key="1">
    <citation type="journal article" date="1996" name="J. Bacteriol.">
        <title>A new Azotobacter vinelandii mannuronan C-5-epimerase gene (algG) is part of an alg gene cluster physically organized in a manner similar to that in Pseudomonas aeruginosa.</title>
        <authorList>
            <person name="Rehm B.H.A."/>
            <person name="Ertesvaag H."/>
            <person name="Valla S."/>
        </authorList>
    </citation>
    <scope>NUCLEOTIDE SEQUENCE [GENOMIC DNA]</scope>
    <scope>FUNCTION</scope>
    <scope>CATALYTIC ACTIVITY</scope>
    <scope>ACTIVITY REGULATION</scope>
    <scope>INDUCTION</scope>
    <source>
        <strain>E</strain>
    </source>
</reference>
<keyword id="KW-0016">Alginate biosynthesis</keyword>
<keyword id="KW-0413">Isomerase</keyword>
<keyword id="KW-0574">Periplasm</keyword>
<keyword id="KW-0677">Repeat</keyword>
<keyword id="KW-0732">Signal</keyword>
<organism>
    <name type="scientific">Azotobacter vinelandii</name>
    <dbReference type="NCBI Taxonomy" id="354"/>
    <lineage>
        <taxon>Bacteria</taxon>
        <taxon>Pseudomonadati</taxon>
        <taxon>Pseudomonadota</taxon>
        <taxon>Gammaproteobacteria</taxon>
        <taxon>Pseudomonadales</taxon>
        <taxon>Pseudomonadaceae</taxon>
        <taxon>Azotobacter</taxon>
    </lineage>
</organism>
<dbReference type="EC" id="5.1.3.37" evidence="4"/>
<dbReference type="EMBL" id="X87973">
    <property type="protein sequence ID" value="CAA61231.1"/>
    <property type="molecule type" value="Genomic_DNA"/>
</dbReference>
<dbReference type="SMR" id="P70805"/>
<dbReference type="UniPathway" id="UPA00286"/>
<dbReference type="GO" id="GO:0042597">
    <property type="term" value="C:periplasmic space"/>
    <property type="evidence" value="ECO:0007669"/>
    <property type="project" value="UniProtKB-SubCell"/>
</dbReference>
<dbReference type="GO" id="GO:0016853">
    <property type="term" value="F:isomerase activity"/>
    <property type="evidence" value="ECO:0007669"/>
    <property type="project" value="UniProtKB-KW"/>
</dbReference>
<dbReference type="GO" id="GO:0042121">
    <property type="term" value="P:alginic acid biosynthetic process"/>
    <property type="evidence" value="ECO:0007669"/>
    <property type="project" value="UniProtKB-UniPathway"/>
</dbReference>
<dbReference type="Gene3D" id="2.160.20.10">
    <property type="entry name" value="Single-stranded right-handed beta-helix, Pectin lyase-like"/>
    <property type="match status" value="1"/>
</dbReference>
<dbReference type="InterPro" id="IPR039448">
    <property type="entry name" value="Beta_helix"/>
</dbReference>
<dbReference type="InterPro" id="IPR006633">
    <property type="entry name" value="Carb-bd_sugar_hydrolysis-dom"/>
</dbReference>
<dbReference type="InterPro" id="IPR053409">
    <property type="entry name" value="Mannuronan_C5-epimerase"/>
</dbReference>
<dbReference type="InterPro" id="IPR022441">
    <property type="entry name" value="Para_beta_helix_rpt-2"/>
</dbReference>
<dbReference type="InterPro" id="IPR006626">
    <property type="entry name" value="PbH1"/>
</dbReference>
<dbReference type="InterPro" id="IPR012334">
    <property type="entry name" value="Pectin_lyas_fold"/>
</dbReference>
<dbReference type="InterPro" id="IPR011050">
    <property type="entry name" value="Pectin_lyase_fold/virulence"/>
</dbReference>
<dbReference type="NCBIfam" id="NF038177">
    <property type="entry name" value="epimerase_AlgG"/>
    <property type="match status" value="1"/>
</dbReference>
<dbReference type="NCBIfam" id="TIGR03804">
    <property type="entry name" value="para_beta_helix"/>
    <property type="match status" value="1"/>
</dbReference>
<dbReference type="Pfam" id="PF13229">
    <property type="entry name" value="Beta_helix"/>
    <property type="match status" value="1"/>
</dbReference>
<dbReference type="SMART" id="SM00722">
    <property type="entry name" value="CASH"/>
    <property type="match status" value="1"/>
</dbReference>
<dbReference type="SMART" id="SM00710">
    <property type="entry name" value="PbH1"/>
    <property type="match status" value="5"/>
</dbReference>
<dbReference type="SUPFAM" id="SSF51126">
    <property type="entry name" value="Pectin lyase-like"/>
    <property type="match status" value="1"/>
</dbReference>